<gene>
    <name evidence="1" type="primary">fbp</name>
    <name type="ordered locus">BPSL2547</name>
</gene>
<sequence length="338" mass="37377">MSITRRTTLSKYLIEQQRETHNLPADLRLLIEVVARACKAISYNVSKGALGDALGTAGSENVQGEVQKKLDILSNEILLDANEWGGNLAAMASEEMETFFPIPANYPRGEYLLVFDPLDGSSNIDVNVSIGTIFSVLRCPDGQQATEQSFLQPGTEQVAAGYAVYGPQTVFVLTTGNGVNCFTLDREVGSWVLTQSNLRIPEDTREYAINASNARHWYEPVKRYIDELNAGAEGPRGENFNMRWIASMVADVHRILNRGGIFMYPADKRTPDRPGKLRLMYEANPMSFIVEQAGGAATTGLKRILDVQPTGLHQRVPVILGSKNEVERVARYHEQAQS</sequence>
<organism>
    <name type="scientific">Burkholderia pseudomallei (strain K96243)</name>
    <dbReference type="NCBI Taxonomy" id="272560"/>
    <lineage>
        <taxon>Bacteria</taxon>
        <taxon>Pseudomonadati</taxon>
        <taxon>Pseudomonadota</taxon>
        <taxon>Betaproteobacteria</taxon>
        <taxon>Burkholderiales</taxon>
        <taxon>Burkholderiaceae</taxon>
        <taxon>Burkholderia</taxon>
        <taxon>pseudomallei group</taxon>
    </lineage>
</organism>
<accession>Q63RX4</accession>
<protein>
    <recommendedName>
        <fullName evidence="1">Fructose-1,6-bisphosphatase class 1</fullName>
        <shortName evidence="1">FBPase class 1</shortName>
        <ecNumber evidence="1">3.1.3.11</ecNumber>
    </recommendedName>
    <alternativeName>
        <fullName evidence="1">D-fructose-1,6-bisphosphate 1-phosphohydrolase class 1</fullName>
    </alternativeName>
</protein>
<keyword id="KW-0119">Carbohydrate metabolism</keyword>
<keyword id="KW-0963">Cytoplasm</keyword>
<keyword id="KW-0378">Hydrolase</keyword>
<keyword id="KW-0460">Magnesium</keyword>
<keyword id="KW-0479">Metal-binding</keyword>
<keyword id="KW-1185">Reference proteome</keyword>
<dbReference type="EC" id="3.1.3.11" evidence="1"/>
<dbReference type="EMBL" id="BX571965">
    <property type="protein sequence ID" value="CAH36554.1"/>
    <property type="molecule type" value="Genomic_DNA"/>
</dbReference>
<dbReference type="RefSeq" id="WP_004189384.1">
    <property type="nucleotide sequence ID" value="NZ_CP009538.1"/>
</dbReference>
<dbReference type="RefSeq" id="YP_109143.1">
    <property type="nucleotide sequence ID" value="NC_006350.1"/>
</dbReference>
<dbReference type="SMR" id="Q63RX4"/>
<dbReference type="STRING" id="272560.BPSL2547"/>
<dbReference type="KEGG" id="bps:BPSL2547"/>
<dbReference type="PATRIC" id="fig|272560.51.peg.2825"/>
<dbReference type="eggNOG" id="COG0158">
    <property type="taxonomic scope" value="Bacteria"/>
</dbReference>
<dbReference type="UniPathway" id="UPA00138"/>
<dbReference type="Proteomes" id="UP000000605">
    <property type="component" value="Chromosome 1"/>
</dbReference>
<dbReference type="GO" id="GO:0005829">
    <property type="term" value="C:cytosol"/>
    <property type="evidence" value="ECO:0007669"/>
    <property type="project" value="TreeGrafter"/>
</dbReference>
<dbReference type="GO" id="GO:0042132">
    <property type="term" value="F:fructose 1,6-bisphosphate 1-phosphatase activity"/>
    <property type="evidence" value="ECO:0007669"/>
    <property type="project" value="UniProtKB-UniRule"/>
</dbReference>
<dbReference type="GO" id="GO:0000287">
    <property type="term" value="F:magnesium ion binding"/>
    <property type="evidence" value="ECO:0007669"/>
    <property type="project" value="UniProtKB-UniRule"/>
</dbReference>
<dbReference type="GO" id="GO:0030388">
    <property type="term" value="P:fructose 1,6-bisphosphate metabolic process"/>
    <property type="evidence" value="ECO:0007669"/>
    <property type="project" value="TreeGrafter"/>
</dbReference>
<dbReference type="GO" id="GO:0006002">
    <property type="term" value="P:fructose 6-phosphate metabolic process"/>
    <property type="evidence" value="ECO:0007669"/>
    <property type="project" value="TreeGrafter"/>
</dbReference>
<dbReference type="GO" id="GO:0006000">
    <property type="term" value="P:fructose metabolic process"/>
    <property type="evidence" value="ECO:0007669"/>
    <property type="project" value="TreeGrafter"/>
</dbReference>
<dbReference type="GO" id="GO:0006094">
    <property type="term" value="P:gluconeogenesis"/>
    <property type="evidence" value="ECO:0007669"/>
    <property type="project" value="UniProtKB-UniRule"/>
</dbReference>
<dbReference type="GO" id="GO:0005986">
    <property type="term" value="P:sucrose biosynthetic process"/>
    <property type="evidence" value="ECO:0007669"/>
    <property type="project" value="TreeGrafter"/>
</dbReference>
<dbReference type="CDD" id="cd00354">
    <property type="entry name" value="FBPase"/>
    <property type="match status" value="1"/>
</dbReference>
<dbReference type="FunFam" id="3.30.540.10:FF:000006">
    <property type="entry name" value="Fructose-1,6-bisphosphatase class 1"/>
    <property type="match status" value="1"/>
</dbReference>
<dbReference type="FunFam" id="3.40.190.80:FF:000011">
    <property type="entry name" value="Fructose-1,6-bisphosphatase class 1"/>
    <property type="match status" value="1"/>
</dbReference>
<dbReference type="Gene3D" id="3.40.190.80">
    <property type="match status" value="1"/>
</dbReference>
<dbReference type="Gene3D" id="3.30.540.10">
    <property type="entry name" value="Fructose-1,6-Bisphosphatase, subunit A, domain 1"/>
    <property type="match status" value="1"/>
</dbReference>
<dbReference type="HAMAP" id="MF_01855">
    <property type="entry name" value="FBPase_class1"/>
    <property type="match status" value="1"/>
</dbReference>
<dbReference type="InterPro" id="IPR044015">
    <property type="entry name" value="FBPase_C_dom"/>
</dbReference>
<dbReference type="InterPro" id="IPR000146">
    <property type="entry name" value="FBPase_class-1"/>
</dbReference>
<dbReference type="InterPro" id="IPR033391">
    <property type="entry name" value="FBPase_N"/>
</dbReference>
<dbReference type="InterPro" id="IPR028343">
    <property type="entry name" value="FBPtase"/>
</dbReference>
<dbReference type="NCBIfam" id="NF006778">
    <property type="entry name" value="PRK09293.1-1"/>
    <property type="match status" value="1"/>
</dbReference>
<dbReference type="NCBIfam" id="NF006779">
    <property type="entry name" value="PRK09293.1-3"/>
    <property type="match status" value="1"/>
</dbReference>
<dbReference type="NCBIfam" id="NF006780">
    <property type="entry name" value="PRK09293.1-4"/>
    <property type="match status" value="1"/>
</dbReference>
<dbReference type="PANTHER" id="PTHR11556">
    <property type="entry name" value="FRUCTOSE-1,6-BISPHOSPHATASE-RELATED"/>
    <property type="match status" value="1"/>
</dbReference>
<dbReference type="PANTHER" id="PTHR11556:SF35">
    <property type="entry name" value="SEDOHEPTULOSE-1,7-BISPHOSPHATASE, CHLOROPLASTIC"/>
    <property type="match status" value="1"/>
</dbReference>
<dbReference type="Pfam" id="PF00316">
    <property type="entry name" value="FBPase"/>
    <property type="match status" value="1"/>
</dbReference>
<dbReference type="Pfam" id="PF18913">
    <property type="entry name" value="FBPase_C"/>
    <property type="match status" value="1"/>
</dbReference>
<dbReference type="PIRSF" id="PIRSF500210">
    <property type="entry name" value="FBPtase"/>
    <property type="match status" value="1"/>
</dbReference>
<dbReference type="PIRSF" id="PIRSF000904">
    <property type="entry name" value="FBPtase_SBPase"/>
    <property type="match status" value="1"/>
</dbReference>
<dbReference type="PRINTS" id="PR00115">
    <property type="entry name" value="F16BPHPHTASE"/>
</dbReference>
<dbReference type="SUPFAM" id="SSF56655">
    <property type="entry name" value="Carbohydrate phosphatase"/>
    <property type="match status" value="1"/>
</dbReference>
<proteinExistence type="inferred from homology"/>
<feature type="chain" id="PRO_0000364499" description="Fructose-1,6-bisphosphatase class 1">
    <location>
        <begin position="1"/>
        <end position="338"/>
    </location>
</feature>
<feature type="binding site" evidence="1">
    <location>
        <position position="94"/>
    </location>
    <ligand>
        <name>Mg(2+)</name>
        <dbReference type="ChEBI" id="CHEBI:18420"/>
        <label>1</label>
    </ligand>
</feature>
<feature type="binding site" evidence="1">
    <location>
        <position position="116"/>
    </location>
    <ligand>
        <name>Mg(2+)</name>
        <dbReference type="ChEBI" id="CHEBI:18420"/>
        <label>1</label>
    </ligand>
</feature>
<feature type="binding site" evidence="1">
    <location>
        <position position="116"/>
    </location>
    <ligand>
        <name>Mg(2+)</name>
        <dbReference type="ChEBI" id="CHEBI:18420"/>
        <label>2</label>
    </ligand>
</feature>
<feature type="binding site" evidence="1">
    <location>
        <position position="118"/>
    </location>
    <ligand>
        <name>Mg(2+)</name>
        <dbReference type="ChEBI" id="CHEBI:18420"/>
        <label>1</label>
    </ligand>
</feature>
<feature type="binding site" evidence="1">
    <location>
        <begin position="119"/>
        <end position="122"/>
    </location>
    <ligand>
        <name>substrate</name>
    </ligand>
</feature>
<feature type="binding site" evidence="1">
    <location>
        <position position="119"/>
    </location>
    <ligand>
        <name>Mg(2+)</name>
        <dbReference type="ChEBI" id="CHEBI:18420"/>
        <label>2</label>
    </ligand>
</feature>
<feature type="binding site" evidence="1">
    <location>
        <position position="210"/>
    </location>
    <ligand>
        <name>substrate</name>
    </ligand>
</feature>
<feature type="binding site" evidence="1">
    <location>
        <position position="276"/>
    </location>
    <ligand>
        <name>substrate</name>
    </ligand>
</feature>
<feature type="binding site" evidence="1">
    <location>
        <position position="282"/>
    </location>
    <ligand>
        <name>Mg(2+)</name>
        <dbReference type="ChEBI" id="CHEBI:18420"/>
        <label>2</label>
    </ligand>
</feature>
<reference key="1">
    <citation type="journal article" date="2004" name="Proc. Natl. Acad. Sci. U.S.A.">
        <title>Genomic plasticity of the causative agent of melioidosis, Burkholderia pseudomallei.</title>
        <authorList>
            <person name="Holden M.T.G."/>
            <person name="Titball R.W."/>
            <person name="Peacock S.J."/>
            <person name="Cerdeno-Tarraga A.-M."/>
            <person name="Atkins T."/>
            <person name="Crossman L.C."/>
            <person name="Pitt T."/>
            <person name="Churcher C."/>
            <person name="Mungall K.L."/>
            <person name="Bentley S.D."/>
            <person name="Sebaihia M."/>
            <person name="Thomson N.R."/>
            <person name="Bason N."/>
            <person name="Beacham I.R."/>
            <person name="Brooks K."/>
            <person name="Brown K.A."/>
            <person name="Brown N.F."/>
            <person name="Challis G.L."/>
            <person name="Cherevach I."/>
            <person name="Chillingworth T."/>
            <person name="Cronin A."/>
            <person name="Crossett B."/>
            <person name="Davis P."/>
            <person name="DeShazer D."/>
            <person name="Feltwell T."/>
            <person name="Fraser A."/>
            <person name="Hance Z."/>
            <person name="Hauser H."/>
            <person name="Holroyd S."/>
            <person name="Jagels K."/>
            <person name="Keith K.E."/>
            <person name="Maddison M."/>
            <person name="Moule S."/>
            <person name="Price C."/>
            <person name="Quail M.A."/>
            <person name="Rabbinowitsch E."/>
            <person name="Rutherford K."/>
            <person name="Sanders M."/>
            <person name="Simmonds M."/>
            <person name="Songsivilai S."/>
            <person name="Stevens K."/>
            <person name="Tumapa S."/>
            <person name="Vesaratchavest M."/>
            <person name="Whitehead S."/>
            <person name="Yeats C."/>
            <person name="Barrell B.G."/>
            <person name="Oyston P.C.F."/>
            <person name="Parkhill J."/>
        </authorList>
    </citation>
    <scope>NUCLEOTIDE SEQUENCE [LARGE SCALE GENOMIC DNA]</scope>
    <source>
        <strain>K96243</strain>
    </source>
</reference>
<name>F16PA_BURPS</name>
<comment type="catalytic activity">
    <reaction evidence="1">
        <text>beta-D-fructose 1,6-bisphosphate + H2O = beta-D-fructose 6-phosphate + phosphate</text>
        <dbReference type="Rhea" id="RHEA:11064"/>
        <dbReference type="ChEBI" id="CHEBI:15377"/>
        <dbReference type="ChEBI" id="CHEBI:32966"/>
        <dbReference type="ChEBI" id="CHEBI:43474"/>
        <dbReference type="ChEBI" id="CHEBI:57634"/>
        <dbReference type="EC" id="3.1.3.11"/>
    </reaction>
</comment>
<comment type="cofactor">
    <cofactor evidence="1">
        <name>Mg(2+)</name>
        <dbReference type="ChEBI" id="CHEBI:18420"/>
    </cofactor>
    <text evidence="1">Binds 2 magnesium ions per subunit.</text>
</comment>
<comment type="pathway">
    <text evidence="1">Carbohydrate biosynthesis; gluconeogenesis.</text>
</comment>
<comment type="subunit">
    <text evidence="1">Homotetramer.</text>
</comment>
<comment type="subcellular location">
    <subcellularLocation>
        <location evidence="1">Cytoplasm</location>
    </subcellularLocation>
</comment>
<comment type="similarity">
    <text evidence="1">Belongs to the FBPase class 1 family.</text>
</comment>
<evidence type="ECO:0000255" key="1">
    <source>
        <dbReference type="HAMAP-Rule" id="MF_01855"/>
    </source>
</evidence>